<organism>
    <name type="scientific">Saccharomyces cerevisiae (strain ATCC 204508 / S288c)</name>
    <name type="common">Baker's yeast</name>
    <dbReference type="NCBI Taxonomy" id="559292"/>
    <lineage>
        <taxon>Eukaryota</taxon>
        <taxon>Fungi</taxon>
        <taxon>Dikarya</taxon>
        <taxon>Ascomycota</taxon>
        <taxon>Saccharomycotina</taxon>
        <taxon>Saccharomycetes</taxon>
        <taxon>Saccharomycetales</taxon>
        <taxon>Saccharomycetaceae</taxon>
        <taxon>Saccharomyces</taxon>
    </lineage>
</organism>
<evidence type="ECO:0000269" key="1">
    <source>
    </source>
</evidence>
<evidence type="ECO:0000305" key="2"/>
<comment type="function">
    <text>Not essential for sporulation.</text>
</comment>
<comment type="induction">
    <text evidence="1">Expressed during sporulation.</text>
</comment>
<name>SPR6_YEAST</name>
<reference key="1">
    <citation type="journal article" date="1990" name="Curr. Genet.">
        <title>Functional analysis of the sporulation-specific SPR6 gene of Saccharomyces cerevisiae.</title>
        <authorList>
            <person name="Kallal L.A."/>
            <person name="Bhattacharyya M."/>
            <person name="Grove S.N."/>
            <person name="Iannacone R.F."/>
            <person name="Pugh T.A."/>
            <person name="Primerano D.A."/>
            <person name="Clancy M.J."/>
        </authorList>
    </citation>
    <scope>NUCLEOTIDE SEQUENCE [GENOMIC DNA]</scope>
    <scope>INDUCTION</scope>
</reference>
<reference key="2">
    <citation type="journal article" date="1997" name="Nature">
        <title>The nucleotide sequence of Saccharomyces cerevisiae chromosome V.</title>
        <authorList>
            <person name="Dietrich F.S."/>
            <person name="Mulligan J.T."/>
            <person name="Hennessy K.M."/>
            <person name="Yelton M.A."/>
            <person name="Allen E."/>
            <person name="Araujo R."/>
            <person name="Aviles E."/>
            <person name="Berno A."/>
            <person name="Brennan T."/>
            <person name="Carpenter J."/>
            <person name="Chen E."/>
            <person name="Cherry J.M."/>
            <person name="Chung E."/>
            <person name="Duncan M."/>
            <person name="Guzman E."/>
            <person name="Hartzell G."/>
            <person name="Hunicke-Smith S."/>
            <person name="Hyman R.W."/>
            <person name="Kayser A."/>
            <person name="Komp C."/>
            <person name="Lashkari D."/>
            <person name="Lew H."/>
            <person name="Lin D."/>
            <person name="Mosedale D."/>
            <person name="Nakahara K."/>
            <person name="Namath A."/>
            <person name="Norgren R."/>
            <person name="Oefner P."/>
            <person name="Oh C."/>
            <person name="Petel F.X."/>
            <person name="Roberts D."/>
            <person name="Sehl P."/>
            <person name="Schramm S."/>
            <person name="Shogren T."/>
            <person name="Smith V."/>
            <person name="Taylor P."/>
            <person name="Wei Y."/>
            <person name="Botstein D."/>
            <person name="Davis R.W."/>
        </authorList>
    </citation>
    <scope>NUCLEOTIDE SEQUENCE [LARGE SCALE GENOMIC DNA]</scope>
    <source>
        <strain>ATCC 204508 / S288c</strain>
    </source>
</reference>
<reference key="3">
    <citation type="journal article" date="2014" name="G3 (Bethesda)">
        <title>The reference genome sequence of Saccharomyces cerevisiae: Then and now.</title>
        <authorList>
            <person name="Engel S.R."/>
            <person name="Dietrich F.S."/>
            <person name="Fisk D.G."/>
            <person name="Binkley G."/>
            <person name="Balakrishnan R."/>
            <person name="Costanzo M.C."/>
            <person name="Dwight S.S."/>
            <person name="Hitz B.C."/>
            <person name="Karra K."/>
            <person name="Nash R.S."/>
            <person name="Weng S."/>
            <person name="Wong E.D."/>
            <person name="Lloyd P."/>
            <person name="Skrzypek M.S."/>
            <person name="Miyasato S.R."/>
            <person name="Simison M."/>
            <person name="Cherry J.M."/>
        </authorList>
    </citation>
    <scope>GENOME REANNOTATION</scope>
    <source>
        <strain>ATCC 204508 / S288c</strain>
    </source>
</reference>
<reference key="4">
    <citation type="journal article" date="2007" name="Genome Res.">
        <title>Approaching a complete repository of sequence-verified protein-encoding clones for Saccharomyces cerevisiae.</title>
        <authorList>
            <person name="Hu Y."/>
            <person name="Rolfs A."/>
            <person name="Bhullar B."/>
            <person name="Murthy T.V.S."/>
            <person name="Zhu C."/>
            <person name="Berger M.F."/>
            <person name="Camargo A.A."/>
            <person name="Kelley F."/>
            <person name="McCarron S."/>
            <person name="Jepson D."/>
            <person name="Richardson A."/>
            <person name="Raphael J."/>
            <person name="Moreira D."/>
            <person name="Taycher E."/>
            <person name="Zuo D."/>
            <person name="Mohr S."/>
            <person name="Kane M.F."/>
            <person name="Williamson J."/>
            <person name="Simpson A.J.G."/>
            <person name="Bulyk M.L."/>
            <person name="Harlow E."/>
            <person name="Marsischky G."/>
            <person name="Kolodner R.D."/>
            <person name="LaBaer J."/>
        </authorList>
    </citation>
    <scope>NUCLEOTIDE SEQUENCE [GENOMIC DNA]</scope>
    <source>
        <strain>ATCC 204508 / S288c</strain>
    </source>
</reference>
<dbReference type="EMBL" id="U30860">
    <property type="protein sequence ID" value="AAA74444.1"/>
    <property type="molecule type" value="Genomic_DNA"/>
</dbReference>
<dbReference type="EMBL" id="X57409">
    <property type="protein sequence ID" value="CAA40671.1"/>
    <property type="molecule type" value="Genomic_DNA"/>
</dbReference>
<dbReference type="EMBL" id="U18916">
    <property type="protein sequence ID" value="AAC03213.1"/>
    <property type="molecule type" value="Genomic_DNA"/>
</dbReference>
<dbReference type="EMBL" id="AY557781">
    <property type="protein sequence ID" value="AAS56107.1"/>
    <property type="molecule type" value="Genomic_DNA"/>
</dbReference>
<dbReference type="EMBL" id="BK006939">
    <property type="protein sequence ID" value="DAA07775.1"/>
    <property type="molecule type" value="Genomic_DNA"/>
</dbReference>
<dbReference type="PIR" id="S50618">
    <property type="entry name" value="S50618"/>
</dbReference>
<dbReference type="RefSeq" id="NP_011040.1">
    <property type="nucleotide sequence ID" value="NM_001179005.1"/>
</dbReference>
<dbReference type="BioGRID" id="36860">
    <property type="interactions" value="56"/>
</dbReference>
<dbReference type="DIP" id="DIP-2625N"/>
<dbReference type="FunCoup" id="Q01684">
    <property type="interactions" value="36"/>
</dbReference>
<dbReference type="IntAct" id="Q01684">
    <property type="interactions" value="6"/>
</dbReference>
<dbReference type="MINT" id="Q01684"/>
<dbReference type="STRING" id="4932.YER115C"/>
<dbReference type="PaxDb" id="4932-YER115C"/>
<dbReference type="EnsemblFungi" id="YER115C_mRNA">
    <property type="protein sequence ID" value="YER115C"/>
    <property type="gene ID" value="YER115C"/>
</dbReference>
<dbReference type="GeneID" id="856851"/>
<dbReference type="KEGG" id="sce:YER115C"/>
<dbReference type="AGR" id="SGD:S000000917"/>
<dbReference type="SGD" id="S000000917">
    <property type="gene designation" value="SPR6"/>
</dbReference>
<dbReference type="VEuPathDB" id="FungiDB:YER115C"/>
<dbReference type="eggNOG" id="ENOG502SBD6">
    <property type="taxonomic scope" value="Eukaryota"/>
</dbReference>
<dbReference type="HOGENOM" id="CLU_1422160_0_0_1"/>
<dbReference type="InParanoid" id="Q01684"/>
<dbReference type="OrthoDB" id="4048767at2759"/>
<dbReference type="BioCyc" id="YEAST:G3O-30279-MONOMER"/>
<dbReference type="BioGRID-ORCS" id="856851">
    <property type="hits" value="0 hits in 10 CRISPR screens"/>
</dbReference>
<dbReference type="PRO" id="PR:Q01684"/>
<dbReference type="Proteomes" id="UP000002311">
    <property type="component" value="Chromosome V"/>
</dbReference>
<dbReference type="RNAct" id="Q01684">
    <property type="molecule type" value="protein"/>
</dbReference>
<dbReference type="GO" id="GO:0005739">
    <property type="term" value="C:mitochondrion"/>
    <property type="evidence" value="ECO:0007005"/>
    <property type="project" value="SGD"/>
</dbReference>
<dbReference type="GO" id="GO:0030437">
    <property type="term" value="P:ascospore formation"/>
    <property type="evidence" value="ECO:0000270"/>
    <property type="project" value="SGD"/>
</dbReference>
<protein>
    <recommendedName>
        <fullName>Sporulation-specific protein</fullName>
    </recommendedName>
    <alternativeName>
        <fullName>SPR6</fullName>
    </alternativeName>
</protein>
<keyword id="KW-0469">Meiosis</keyword>
<keyword id="KW-1185">Reference proteome</keyword>
<keyword id="KW-0749">Sporulation</keyword>
<feature type="chain" id="PRO_0000072148" description="Sporulation-specific protein">
    <location>
        <begin position="1"/>
        <end position="191"/>
    </location>
</feature>
<feature type="sequence conflict" description="In Ref. 1; AAA74444/CAA40671." evidence="2" ref="1">
    <original>S</original>
    <variation>C</variation>
    <location>
        <position position="4"/>
    </location>
</feature>
<proteinExistence type="evidence at transcript level"/>
<accession>Q01684</accession>
<accession>D3DM21</accession>
<sequence length="191" mass="21512">MAVSNIWQSYSSSNLHWIYPLYTNNCSQNVKSSFTAEILLKRRCNDIQDILNDRMIELLLQGACDPNKQQNYLQGMSPSRKKKTHVKKFLKKQKKSRKPITLEHGCLSGPVTLRFGNFAGIRDLRGTRCPLHGIKHGVHPKPGERCACQQATLFPSPLARFSCDQSAVLGCAASSTRVYDSIADEFSSLYF</sequence>
<gene>
    <name type="primary">SPR6</name>
    <name type="ordered locus">YER115C</name>
</gene>